<evidence type="ECO:0000255" key="1">
    <source>
        <dbReference type="PROSITE-ProRule" id="PRU00666"/>
    </source>
</evidence>
<evidence type="ECO:0000255" key="2">
    <source>
        <dbReference type="PROSITE-ProRule" id="PRU01266"/>
    </source>
</evidence>
<evidence type="ECO:0000269" key="3">
    <source>
    </source>
</evidence>
<evidence type="ECO:0000269" key="4">
    <source>
    </source>
</evidence>
<evidence type="ECO:0000269" key="5">
    <source>
    </source>
</evidence>
<evidence type="ECO:0000303" key="6">
    <source>
    </source>
</evidence>
<evidence type="ECO:0000303" key="7">
    <source>
    </source>
</evidence>
<evidence type="ECO:0000305" key="8"/>
<evidence type="ECO:0000312" key="9">
    <source>
        <dbReference type="EMBL" id="BAA21631.1"/>
    </source>
</evidence>
<evidence type="ECO:0007744" key="10">
    <source>
        <dbReference type="PDB" id="5UL2"/>
    </source>
</evidence>
<evidence type="ECO:0007744" key="11">
    <source>
        <dbReference type="PDB" id="5UL3"/>
    </source>
</evidence>
<evidence type="ECO:0007744" key="12">
    <source>
        <dbReference type="PDB" id="5UL4"/>
    </source>
</evidence>
<evidence type="ECO:0007829" key="13">
    <source>
        <dbReference type="PDB" id="5UL2"/>
    </source>
</evidence>
<evidence type="ECO:0007829" key="14">
    <source>
        <dbReference type="PDB" id="5UL3"/>
    </source>
</evidence>
<evidence type="ECO:0007829" key="15">
    <source>
        <dbReference type="PDB" id="5UL4"/>
    </source>
</evidence>
<name>OXSB_PRIMG</name>
<gene>
    <name evidence="9" type="primary">oxsB</name>
</gene>
<dbReference type="EC" id="5.3.99.13" evidence="3 4"/>
<dbReference type="EMBL" id="AB005787">
    <property type="protein sequence ID" value="BAA21631.1"/>
    <property type="molecule type" value="Genomic_DNA"/>
</dbReference>
<dbReference type="PIR" id="T00031">
    <property type="entry name" value="T00031"/>
</dbReference>
<dbReference type="PDB" id="5UL2">
    <property type="method" value="X-ray"/>
    <property type="resolution" value="2.55 A"/>
    <property type="chains" value="A=1-744"/>
</dbReference>
<dbReference type="PDB" id="5UL3">
    <property type="method" value="X-ray"/>
    <property type="resolution" value="1.80 A"/>
    <property type="chains" value="A=1-744"/>
</dbReference>
<dbReference type="PDB" id="5UL4">
    <property type="method" value="X-ray"/>
    <property type="resolution" value="1.85 A"/>
    <property type="chains" value="A=1-744"/>
</dbReference>
<dbReference type="PDBsum" id="5UL2"/>
<dbReference type="PDBsum" id="5UL3"/>
<dbReference type="PDBsum" id="5UL4"/>
<dbReference type="SMR" id="O24770"/>
<dbReference type="KEGG" id="ag:BAA21631"/>
<dbReference type="GO" id="GO:0051539">
    <property type="term" value="F:4 iron, 4 sulfur cluster binding"/>
    <property type="evidence" value="ECO:0007669"/>
    <property type="project" value="UniProtKB-KW"/>
</dbReference>
<dbReference type="GO" id="GO:0031419">
    <property type="term" value="F:cobalamin binding"/>
    <property type="evidence" value="ECO:0007669"/>
    <property type="project" value="UniProtKB-KW"/>
</dbReference>
<dbReference type="GO" id="GO:0016853">
    <property type="term" value="F:isomerase activity"/>
    <property type="evidence" value="ECO:0007669"/>
    <property type="project" value="UniProtKB-KW"/>
</dbReference>
<dbReference type="GO" id="GO:0046872">
    <property type="term" value="F:metal ion binding"/>
    <property type="evidence" value="ECO:0007669"/>
    <property type="project" value="UniProtKB-KW"/>
</dbReference>
<dbReference type="Gene3D" id="3.40.50.280">
    <property type="entry name" value="Cobalamin-binding domain"/>
    <property type="match status" value="1"/>
</dbReference>
<dbReference type="Gene3D" id="3.80.30.20">
    <property type="entry name" value="tm_1862 like domain"/>
    <property type="match status" value="1"/>
</dbReference>
<dbReference type="InterPro" id="IPR006158">
    <property type="entry name" value="Cobalamin-bd"/>
</dbReference>
<dbReference type="InterPro" id="IPR006638">
    <property type="entry name" value="Elp3/MiaA/NifB-like_rSAM"/>
</dbReference>
<dbReference type="InterPro" id="IPR034532">
    <property type="entry name" value="OxsB-like"/>
</dbReference>
<dbReference type="InterPro" id="IPR007197">
    <property type="entry name" value="rSAM"/>
</dbReference>
<dbReference type="InterPro" id="IPR023404">
    <property type="entry name" value="rSAM_horseshoe"/>
</dbReference>
<dbReference type="InterPro" id="IPR051198">
    <property type="entry name" value="Tetrapyrrole_Bchl_Biosynth_MTs"/>
</dbReference>
<dbReference type="PANTHER" id="PTHR43409">
    <property type="entry name" value="ANAEROBIC MAGNESIUM-PROTOPORPHYRIN IX MONOMETHYL ESTER CYCLASE-RELATED"/>
    <property type="match status" value="1"/>
</dbReference>
<dbReference type="PANTHER" id="PTHR43409:SF7">
    <property type="entry name" value="BLL1977 PROTEIN"/>
    <property type="match status" value="1"/>
</dbReference>
<dbReference type="Pfam" id="PF04055">
    <property type="entry name" value="Radical_SAM"/>
    <property type="match status" value="1"/>
</dbReference>
<dbReference type="SFLD" id="SFLDG01082">
    <property type="entry name" value="B12-binding_domain_containing"/>
    <property type="match status" value="1"/>
</dbReference>
<dbReference type="SFLD" id="SFLDF00430">
    <property type="entry name" value="OxsB-like"/>
    <property type="match status" value="1"/>
</dbReference>
<dbReference type="SMART" id="SM00729">
    <property type="entry name" value="Elp3"/>
    <property type="match status" value="1"/>
</dbReference>
<dbReference type="SUPFAM" id="SSF102114">
    <property type="entry name" value="Radical SAM enzymes"/>
    <property type="match status" value="1"/>
</dbReference>
<dbReference type="PROSITE" id="PS51332">
    <property type="entry name" value="B12_BINDING"/>
    <property type="match status" value="1"/>
</dbReference>
<dbReference type="PROSITE" id="PS51918">
    <property type="entry name" value="RADICAL_SAM"/>
    <property type="match status" value="1"/>
</dbReference>
<feature type="chain" id="PRO_0000461608" description="4'-phospho-dehydrooxetanocin synthase">
    <location>
        <begin position="1"/>
        <end position="744"/>
    </location>
</feature>
<feature type="domain" description="B12-binding" evidence="1">
    <location>
        <begin position="119"/>
        <end position="259"/>
    </location>
</feature>
<feature type="domain" description="Radical SAM core" evidence="2">
    <location>
        <begin position="299"/>
        <end position="545"/>
    </location>
</feature>
<feature type="binding site" evidence="3 11 12">
    <location>
        <position position="135"/>
    </location>
    <ligand>
        <name>cob(II)alamin</name>
        <dbReference type="ChEBI" id="CHEBI:16304"/>
    </ligand>
</feature>
<feature type="binding site" evidence="3 11 12">
    <location>
        <position position="139"/>
    </location>
    <ligand>
        <name>cob(II)alamin</name>
        <dbReference type="ChEBI" id="CHEBI:16304"/>
    </ligand>
</feature>
<feature type="binding site" evidence="3 11 12">
    <location>
        <position position="184"/>
    </location>
    <ligand>
        <name>cob(II)alamin</name>
        <dbReference type="ChEBI" id="CHEBI:16304"/>
    </ligand>
</feature>
<feature type="binding site" evidence="3 11 12">
    <location>
        <position position="241"/>
    </location>
    <ligand>
        <name>cob(II)alamin</name>
        <dbReference type="ChEBI" id="CHEBI:16304"/>
    </ligand>
</feature>
<feature type="binding site" evidence="3 11 12">
    <location>
        <position position="242"/>
    </location>
    <ligand>
        <name>cob(II)alamin</name>
        <dbReference type="ChEBI" id="CHEBI:16304"/>
    </ligand>
</feature>
<feature type="binding site" evidence="3 11 12">
    <location>
        <position position="308"/>
    </location>
    <ligand>
        <name>cob(II)alamin</name>
        <dbReference type="ChEBI" id="CHEBI:16304"/>
    </ligand>
</feature>
<feature type="binding site" evidence="3 11 12">
    <location>
        <position position="313"/>
    </location>
    <ligand>
        <name>[4Fe-4S] cluster</name>
        <dbReference type="ChEBI" id="CHEBI:49883"/>
        <note>4Fe-4S-S-AdoMet</note>
    </ligand>
</feature>
<feature type="binding site" evidence="3 11 12">
    <location>
        <position position="318"/>
    </location>
    <ligand>
        <name>[4Fe-4S] cluster</name>
        <dbReference type="ChEBI" id="CHEBI:49883"/>
        <note>4Fe-4S-S-AdoMet</note>
    </ligand>
</feature>
<feature type="binding site" evidence="3 11 12">
    <location>
        <position position="321"/>
    </location>
    <ligand>
        <name>[4Fe-4S] cluster</name>
        <dbReference type="ChEBI" id="CHEBI:49883"/>
        <note>4Fe-4S-S-AdoMet</note>
    </ligand>
</feature>
<feature type="binding site" evidence="3 12">
    <location>
        <position position="322"/>
    </location>
    <ligand>
        <name>cob(II)alamin</name>
        <dbReference type="ChEBI" id="CHEBI:16304"/>
    </ligand>
</feature>
<feature type="binding site" evidence="3 12">
    <location>
        <position position="325"/>
    </location>
    <ligand>
        <name>cob(II)alamin</name>
        <dbReference type="ChEBI" id="CHEBI:16304"/>
    </ligand>
</feature>
<feature type="binding site" evidence="3 11 12">
    <location>
        <position position="326"/>
    </location>
    <ligand>
        <name>cob(II)alamin</name>
        <dbReference type="ChEBI" id="CHEBI:16304"/>
    </ligand>
</feature>
<feature type="binding site" evidence="3 11 12">
    <location>
        <position position="361"/>
    </location>
    <ligand>
        <name>cob(II)alamin</name>
        <dbReference type="ChEBI" id="CHEBI:16304"/>
    </ligand>
</feature>
<feature type="binding site" evidence="3 11 12">
    <location>
        <position position="363"/>
    </location>
    <ligand>
        <name>cob(II)alamin</name>
        <dbReference type="ChEBI" id="CHEBI:16304"/>
    </ligand>
</feature>
<feature type="binding site" evidence="3 12">
    <location>
        <position position="436"/>
    </location>
    <ligand>
        <name>S-adenosyl-L-methionine</name>
        <dbReference type="ChEBI" id="CHEBI:59789"/>
    </ligand>
</feature>
<feature type="binding site" evidence="3 12">
    <location>
        <position position="545"/>
    </location>
    <ligand>
        <name>S-adenosyl-L-methionine</name>
        <dbReference type="ChEBI" id="CHEBI:59789"/>
    </ligand>
</feature>
<feature type="helix" evidence="14">
    <location>
        <begin position="7"/>
        <end position="21"/>
    </location>
</feature>
<feature type="helix" evidence="14">
    <location>
        <begin position="28"/>
        <end position="39"/>
    </location>
</feature>
<feature type="strand" evidence="14">
    <location>
        <begin position="48"/>
        <end position="54"/>
    </location>
</feature>
<feature type="helix" evidence="14">
    <location>
        <begin position="56"/>
        <end position="58"/>
    </location>
</feature>
<feature type="strand" evidence="14">
    <location>
        <begin position="60"/>
        <end position="66"/>
    </location>
</feature>
<feature type="strand" evidence="14">
    <location>
        <begin position="69"/>
        <end position="73"/>
    </location>
</feature>
<feature type="strand" evidence="13">
    <location>
        <begin position="75"/>
        <end position="77"/>
    </location>
</feature>
<feature type="helix" evidence="14">
    <location>
        <begin position="79"/>
        <end position="81"/>
    </location>
</feature>
<feature type="helix" evidence="14">
    <location>
        <begin position="83"/>
        <end position="88"/>
    </location>
</feature>
<feature type="strand" evidence="14">
    <location>
        <begin position="95"/>
        <end position="98"/>
    </location>
</feature>
<feature type="strand" evidence="14">
    <location>
        <begin position="102"/>
        <end position="107"/>
    </location>
</feature>
<feature type="helix" evidence="14">
    <location>
        <begin position="109"/>
        <end position="115"/>
    </location>
</feature>
<feature type="strand" evidence="14">
    <location>
        <begin position="119"/>
        <end position="124"/>
    </location>
</feature>
<feature type="turn" evidence="14">
    <location>
        <begin position="128"/>
        <end position="130"/>
    </location>
</feature>
<feature type="strand" evidence="13">
    <location>
        <begin position="131"/>
        <end position="133"/>
    </location>
</feature>
<feature type="helix" evidence="14">
    <location>
        <begin position="138"/>
        <end position="149"/>
    </location>
</feature>
<feature type="strand" evidence="14">
    <location>
        <begin position="154"/>
        <end position="159"/>
    </location>
</feature>
<feature type="helix" evidence="14">
    <location>
        <begin position="160"/>
        <end position="162"/>
    </location>
</feature>
<feature type="helix" evidence="14">
    <location>
        <begin position="166"/>
        <end position="176"/>
    </location>
</feature>
<feature type="strand" evidence="14">
    <location>
        <begin position="179"/>
        <end position="184"/>
    </location>
</feature>
<feature type="helix" evidence="14">
    <location>
        <begin position="190"/>
        <end position="205"/>
    </location>
</feature>
<feature type="strand" evidence="14">
    <location>
        <begin position="212"/>
        <end position="217"/>
    </location>
</feature>
<feature type="helix" evidence="14">
    <location>
        <begin position="218"/>
        <end position="222"/>
    </location>
</feature>
<feature type="helix" evidence="14">
    <location>
        <begin position="224"/>
        <end position="230"/>
    </location>
</feature>
<feature type="strand" evidence="14">
    <location>
        <begin position="235"/>
        <end position="237"/>
    </location>
</feature>
<feature type="helix" evidence="14">
    <location>
        <begin position="242"/>
        <end position="252"/>
    </location>
</feature>
<feature type="helix" evidence="14">
    <location>
        <begin position="258"/>
        <end position="260"/>
    </location>
</feature>
<feature type="strand" evidence="14">
    <location>
        <begin position="264"/>
        <end position="267"/>
    </location>
</feature>
<feature type="strand" evidence="14">
    <location>
        <begin position="273"/>
        <end position="275"/>
    </location>
</feature>
<feature type="helix" evidence="14">
    <location>
        <begin position="283"/>
        <end position="286"/>
    </location>
</feature>
<feature type="helix" evidence="14">
    <location>
        <begin position="295"/>
        <end position="300"/>
    </location>
</feature>
<feature type="strand" evidence="14">
    <location>
        <begin position="304"/>
        <end position="307"/>
    </location>
</feature>
<feature type="strand" evidence="14">
    <location>
        <begin position="310"/>
        <end position="312"/>
    </location>
</feature>
<feature type="helix" evidence="13">
    <location>
        <begin position="315"/>
        <end position="317"/>
    </location>
</feature>
<feature type="turn" evidence="14">
    <location>
        <begin position="324"/>
        <end position="326"/>
    </location>
</feature>
<feature type="helix" evidence="14">
    <location>
        <begin position="335"/>
        <end position="351"/>
    </location>
</feature>
<feature type="strand" evidence="14">
    <location>
        <begin position="356"/>
        <end position="360"/>
    </location>
</feature>
<feature type="strand" evidence="15">
    <location>
        <begin position="363"/>
        <end position="366"/>
    </location>
</feature>
<feature type="helix" evidence="13">
    <location>
        <begin position="370"/>
        <end position="372"/>
    </location>
</feature>
<feature type="helix" evidence="14">
    <location>
        <begin position="374"/>
        <end position="386"/>
    </location>
</feature>
<feature type="strand" evidence="14">
    <location>
        <begin position="388"/>
        <end position="390"/>
    </location>
</feature>
<feature type="strand" evidence="14">
    <location>
        <begin position="393"/>
        <end position="395"/>
    </location>
</feature>
<feature type="helix" evidence="14">
    <location>
        <begin position="400"/>
        <end position="402"/>
    </location>
</feature>
<feature type="helix" evidence="14">
    <location>
        <begin position="410"/>
        <end position="426"/>
    </location>
</feature>
<feature type="strand" evidence="14">
    <location>
        <begin position="432"/>
        <end position="436"/>
    </location>
</feature>
<feature type="helix" evidence="14">
    <location>
        <begin position="440"/>
        <end position="445"/>
    </location>
</feature>
<feature type="helix" evidence="14">
    <location>
        <begin position="452"/>
        <end position="464"/>
    </location>
</feature>
<feature type="strand" evidence="14">
    <location>
        <begin position="470"/>
        <end position="473"/>
    </location>
</feature>
<feature type="helix" evidence="14">
    <location>
        <begin position="484"/>
        <end position="493"/>
    </location>
</feature>
<feature type="strand" evidence="14">
    <location>
        <begin position="496"/>
        <end position="498"/>
    </location>
</feature>
<feature type="helix" evidence="14">
    <location>
        <begin position="510"/>
        <end position="519"/>
    </location>
</feature>
<feature type="helix" evidence="14">
    <location>
        <begin position="521"/>
        <end position="527"/>
    </location>
</feature>
<feature type="helix" evidence="14">
    <location>
        <begin position="533"/>
        <end position="536"/>
    </location>
</feature>
<feature type="strand" evidence="14">
    <location>
        <begin position="537"/>
        <end position="539"/>
    </location>
</feature>
<feature type="helix" evidence="14">
    <location>
        <begin position="551"/>
        <end position="563"/>
    </location>
</feature>
<feature type="helix" evidence="14">
    <location>
        <begin position="570"/>
        <end position="572"/>
    </location>
</feature>
<feature type="turn" evidence="14">
    <location>
        <begin position="576"/>
        <end position="579"/>
    </location>
</feature>
<feature type="helix" evidence="14">
    <location>
        <begin position="588"/>
        <end position="617"/>
    </location>
</feature>
<feature type="helix" evidence="14">
    <location>
        <begin position="620"/>
        <end position="648"/>
    </location>
</feature>
<feature type="helix" evidence="14">
    <location>
        <begin position="652"/>
        <end position="664"/>
    </location>
</feature>
<feature type="helix" evidence="14">
    <location>
        <begin position="683"/>
        <end position="709"/>
    </location>
</feature>
<feature type="helix" evidence="14">
    <location>
        <begin position="720"/>
        <end position="730"/>
    </location>
</feature>
<feature type="turn" evidence="14">
    <location>
        <begin position="731"/>
        <end position="733"/>
    </location>
</feature>
<sequence length="744" mass="86571">MQTYLSTKSIEYYLKELKEIFSQIWLKPSEIEKRCEELFKRSKEFDYKRILVSGETDNTTLYVIEDSSKIHVFSPNRDLRENPLLMRWHPSWYEIESKEIYYKCFLSCEELYEHLELPTVTLVNLCVIENFPIPRLNLSTGTLSSYLRKEQLAKVELIDMQVGTTINQIIKNLLDSQPDIIGLSVNFGQKKLAFEILDLIYSHIENGDLSSIITVGNVIPSFSPEQFFERYPSLLICDKEGEYTLRDLIKMLKKELKLDEVNGISYVDESGEVKHNVAETVNFKEEVPTPSLDILGEISKFRGALTLETSRGCDYSRCTFCPRDHKLRSWRPLSVEQTLKQLDDILRAGKHFNIKPHIYMADEEFIGELPNGTEAQRIIDICEGLLKREEKIKFDFAARADSVYEPKRTKEWNVERLKMWHYCALAGADRIFIGVESGSNQQLKRYGKGTTSEQNIIALRLVSALGINLRIGFIMFDQLMKGLDNLKENLDFLERTDALMKPIDIGDMTYEELYDKLLNDKEFIEKHKTGKPVYTIVSYMLASMEILMNTPYSRMVQLTERKEEVNLIMNDGKPDMNMGRYATSFVDKTNGNLSEACQMWIDSNFGVMYTIKSLHKVANPREKKKLYSYMETHREISHFLLKYLVYNLSPDKESQIILSDFLRMHSMEHILDNSKINVGDGSKENILNVMTNWQLIMEKLLRDVEADLNKGIITDSEDHRLHNTLKRWFSDMGNWSLINAYELN</sequence>
<accession>O24770</accession>
<proteinExistence type="evidence at protein level"/>
<organism>
    <name type="scientific">Priestia megaterium</name>
    <name type="common">Bacillus megaterium</name>
    <dbReference type="NCBI Taxonomy" id="1404"/>
    <lineage>
        <taxon>Bacteria</taxon>
        <taxon>Bacillati</taxon>
        <taxon>Bacillota</taxon>
        <taxon>Bacilli</taxon>
        <taxon>Bacillales</taxon>
        <taxon>Bacillaceae</taxon>
        <taxon>Priestia</taxon>
    </lineage>
</organism>
<protein>
    <recommendedName>
        <fullName evidence="8">4'-phospho-dehydrooxetanocin synthase</fullName>
        <ecNumber evidence="3 4">5.3.99.13</ecNumber>
    </recommendedName>
    <alternativeName>
        <fullName evidence="7">Cobalamin-dependent S-adenosylmethionine radical enzyme OxsB</fullName>
    </alternativeName>
    <alternativeName>
        <fullName evidence="8">dAMP isomerase (4'-phospho-dehydrooxetanocin-forming)</fullName>
    </alternativeName>
</protein>
<geneLocation type="plasmid" evidence="6">
    <name>pOXT1</name>
</geneLocation>
<comment type="function">
    <text evidence="3 4 5">Isomerase involved in the biosynthesis of oxetanocin A (OXT-A), a nucleoside analog with antitumor, antiviral and antibacterial properties (PubMed:28346939, PubMed:33560833). Catalyzes an oxidative ring contraction of dAMP, forming an oxetane aldehyde (PubMed:28346939, PubMed:33560833). In addition, shows methyltransferase activity in vitro and is able to catalyze the radical mediated, stereoselective C2'-methylation of dAMP to form methylated 2'-dAMP (PubMed:33560833, PubMed:36719327). Also catalyzes the demethylation of S-adenosyl-L-methionine (SAM) to S-adenosyl-L-homocysteine (SAH) (PubMed:33560833).</text>
</comment>
<comment type="catalytic activity">
    <reaction evidence="3 4">
        <text>dAMP + S-adenosyl-L-methionine = 4'-phospho-dehydrooxetanocin + 5'-deoxyadenosine + L-methionine + H(+)</text>
        <dbReference type="Rhea" id="RHEA:81407"/>
        <dbReference type="ChEBI" id="CHEBI:15378"/>
        <dbReference type="ChEBI" id="CHEBI:17319"/>
        <dbReference type="ChEBI" id="CHEBI:57844"/>
        <dbReference type="ChEBI" id="CHEBI:58245"/>
        <dbReference type="ChEBI" id="CHEBI:59789"/>
        <dbReference type="ChEBI" id="CHEBI:231877"/>
        <dbReference type="EC" id="5.3.99.13"/>
    </reaction>
    <physiologicalReaction direction="left-to-right" evidence="3 4">
        <dbReference type="Rhea" id="RHEA:81408"/>
    </physiologicalReaction>
</comment>
<comment type="catalytic activity">
    <reaction evidence="3 4">
        <text>AH2 + 2 S-adenosyl-L-methionine = 2 5'-deoxyadenosin-5'-yl radical + 2 L-methionine + A + 2 H(+)</text>
        <dbReference type="Rhea" id="RHEA:81411"/>
        <dbReference type="ChEBI" id="CHEBI:13193"/>
        <dbReference type="ChEBI" id="CHEBI:15378"/>
        <dbReference type="ChEBI" id="CHEBI:17499"/>
        <dbReference type="ChEBI" id="CHEBI:57844"/>
        <dbReference type="ChEBI" id="CHEBI:59789"/>
        <dbReference type="ChEBI" id="CHEBI:231878"/>
    </reaction>
    <physiologicalReaction direction="left-to-right" evidence="3 4">
        <dbReference type="Rhea" id="RHEA:81412"/>
    </physiologicalReaction>
</comment>
<comment type="catalytic activity">
    <reaction evidence="3 4">
        <text>2 5'-deoxyadenosin-5'-yl radical + 2 dAMP + A = 2 4'-phospho-dehydrooxetanocin + 2 5'-deoxyadenosine + AH2</text>
        <dbReference type="Rhea" id="RHEA:81415"/>
        <dbReference type="ChEBI" id="CHEBI:13193"/>
        <dbReference type="ChEBI" id="CHEBI:17319"/>
        <dbReference type="ChEBI" id="CHEBI:17499"/>
        <dbReference type="ChEBI" id="CHEBI:58245"/>
        <dbReference type="ChEBI" id="CHEBI:231877"/>
        <dbReference type="ChEBI" id="CHEBI:231878"/>
    </reaction>
    <physiologicalReaction direction="left-to-right" evidence="3 4">
        <dbReference type="Rhea" id="RHEA:81416"/>
    </physiologicalReaction>
</comment>
<comment type="cofactor">
    <cofactor evidence="3">
        <name>[4Fe-4S] cluster</name>
        <dbReference type="ChEBI" id="CHEBI:49883"/>
    </cofactor>
    <text evidence="3">Binds 1 [4Fe-4S] cluster. The cluster is coordinated with 3 cysteines and an exchangeable S-adenosyl-L-methionine.</text>
</comment>
<comment type="cofactor">
    <cofactor evidence="3">
        <name>cob(II)alamin</name>
        <dbReference type="ChEBI" id="CHEBI:16304"/>
    </cofactor>
</comment>
<comment type="activity regulation">
    <text evidence="3 4">Requires OxsA for the oxidative ring contraction activity (PubMed:28346939, PubMed:33560833). Activation of OxsB requires its direct interaction with OxsA and is independent of OxsA phosphohydrolase activity (PubMed:33560833). In contrast to ring contraction, methylation does not require the presence of OxsA (PubMed:33560833).</text>
</comment>
<comment type="domain">
    <text evidence="3">Contains four domains: an N-terminal domain of unknown function, a Rossmann fold that houses cobalamin, a partial triose phosphate isomerase barrel AdoMet radical domain and a C-terminal helix bundle.</text>
</comment>
<comment type="similarity">
    <text evidence="8">Belongs to the radical SAM superfamily.</text>
</comment>
<keyword id="KW-0002">3D-structure</keyword>
<keyword id="KW-0004">4Fe-4S</keyword>
<keyword id="KW-0846">Cobalamin</keyword>
<keyword id="KW-0170">Cobalt</keyword>
<keyword id="KW-0408">Iron</keyword>
<keyword id="KW-0411">Iron-sulfur</keyword>
<keyword id="KW-0413">Isomerase</keyword>
<keyword id="KW-0479">Metal-binding</keyword>
<keyword id="KW-0614">Plasmid</keyword>
<keyword id="KW-0949">S-adenosyl-L-methionine</keyword>
<reference key="1">
    <citation type="journal article" date="1999" name="Biosci. Biotechnol. Biochem.">
        <title>Cloning of oxetanocin A biosynthetic and resistance genes that reside on a plasmid of Bacillus megaterium strain NK84-0128.</title>
        <authorList>
            <person name="Morita M."/>
            <person name="Tomita K."/>
            <person name="Ishizawa M."/>
            <person name="Takagi K."/>
            <person name="Kawamura F."/>
            <person name="Takahashi H."/>
            <person name="Morino T."/>
        </authorList>
    </citation>
    <scope>NUCLEOTIDE SEQUENCE [GENOMIC DNA]</scope>
    <source>
        <strain>NK84-0128</strain>
        <plasmid>pOXT1</plasmid>
    </source>
</reference>
<reference key="2">
    <citation type="journal article" date="2021" name="Biochemistry">
        <title>Biosynthesis of Oxetanocin-A Includes a B12-Dependent Radical SAM Enzyme That Can Catalyze both Oxidative Ring Contraction and the Demethylation of SAM.</title>
        <authorList>
            <person name="Zhong A."/>
            <person name="Lee Y.H."/>
            <person name="Liu Y.N."/>
            <person name="Liu H.W."/>
        </authorList>
    </citation>
    <scope>FUNCTION</scope>
    <scope>CATALYTIC ACTIVITY</scope>
    <scope>ACTIVITY REGULATION</scope>
</reference>
<reference key="3">
    <citation type="journal article" date="2023" name="J. Am. Chem. Soc.">
        <title>Changing Fates of the Substrate Radicals Generated in the Active Sites of the B12-Dependent Radical SAM Enzymes OxsB and AlsB.</title>
        <authorList>
            <person name="Lee Y.H."/>
            <person name="Yeh Y.C."/>
            <person name="Fan P.H."/>
            <person name="Zhong A."/>
            <person name="Ruszczycky M.W."/>
            <person name="Liu H.W."/>
        </authorList>
    </citation>
    <scope>FUNCTION IN METHYLATION</scope>
</reference>
<reference evidence="10 11 12" key="4">
    <citation type="journal article" date="2017" name="Nature">
        <title>A B12-dependent radical SAM enzyme involved in oxetanocin A biosynthesis.</title>
        <authorList>
            <person name="Bridwell-Rabb J."/>
            <person name="Zhong A."/>
            <person name="Sun H.G."/>
            <person name="Drennan C.L."/>
            <person name="Liu H.W."/>
        </authorList>
    </citation>
    <scope>X-RAY CRYSTALLOGRAPHY (1.80 ANGSTROMS) IN COMPLEXES WITH [4FE-4S] CLUSTER; COB(II)ALAMIN AND S-ADENOSYL-L-METHIONINE</scope>
    <scope>FUNCTION</scope>
    <scope>CATALYTIC ACTIVITY</scope>
    <scope>COFACTOR</scope>
    <scope>ACTIVITY REGULATION</scope>
    <scope>DOMAIN</scope>
</reference>